<reference key="1">
    <citation type="submission" date="2007-02" db="EMBL/GenBank/DDBJ databases">
        <title>Complete sequence of Mycobacterium sp. JLS.</title>
        <authorList>
            <consortium name="US DOE Joint Genome Institute"/>
            <person name="Copeland A."/>
            <person name="Lucas S."/>
            <person name="Lapidus A."/>
            <person name="Barry K."/>
            <person name="Detter J.C."/>
            <person name="Glavina del Rio T."/>
            <person name="Hammon N."/>
            <person name="Israni S."/>
            <person name="Dalin E."/>
            <person name="Tice H."/>
            <person name="Pitluck S."/>
            <person name="Chain P."/>
            <person name="Malfatti S."/>
            <person name="Shin M."/>
            <person name="Vergez L."/>
            <person name="Schmutz J."/>
            <person name="Larimer F."/>
            <person name="Land M."/>
            <person name="Hauser L."/>
            <person name="Kyrpides N."/>
            <person name="Mikhailova N."/>
            <person name="Miller C.D."/>
            <person name="Anderson A.J."/>
            <person name="Sims R.C."/>
            <person name="Richardson P."/>
        </authorList>
    </citation>
    <scope>NUCLEOTIDE SEQUENCE [LARGE SCALE GENOMIC DNA]</scope>
    <source>
        <strain>JLS</strain>
    </source>
</reference>
<organism>
    <name type="scientific">Mycobacterium sp. (strain JLS)</name>
    <dbReference type="NCBI Taxonomy" id="164757"/>
    <lineage>
        <taxon>Bacteria</taxon>
        <taxon>Bacillati</taxon>
        <taxon>Actinomycetota</taxon>
        <taxon>Actinomycetes</taxon>
        <taxon>Mycobacteriales</taxon>
        <taxon>Mycobacteriaceae</taxon>
        <taxon>Mycobacterium</taxon>
    </lineage>
</organism>
<sequence>MPRFVDRVVIHARAGNGGNGCASVHREKFKPLGGPDGGNGGRGGSIVLVVDPQVHTLLDFHFHPHVVAPSGKQGAGSNRDGAAGADLEVRVPDGTVVLDEEGRVLADLVGAGTRFEAAAGGRGGLGNAALASRSRRAPGFALLGEKGQVRELTLELKTVADVGLIGFPSAGKSSLVSTISAAKPKIADYPFTTLVPNLGVVSAGDHTFTVADVPGLIPGASEGRGLGLEFLRHIERCAVLVHVVDCATMEPGRDPISDIEALEAELAAYRPTLQGDSTLGDLAERPRAVVLNKIDVPDARELADFVRDEVAERFGWPVFEVSTVAREGLRPFIFALWDMVRTYREAQPPVVPRRPIIRPIAVDETGFSVHPDGQGGFVVRGTRPERWINQTDFDNDEAVGYLGDRLARLGVEEELLRLGARPGCAVTIGDMTFDWEPQTPAGVDVQMSGRGTDTRLEQTDRVSAAERKIARRERRQSTDEPGGEE</sequence>
<proteinExistence type="inferred from homology"/>
<protein>
    <recommendedName>
        <fullName evidence="1">GTPase Obg</fullName>
        <ecNumber evidence="1">3.6.5.-</ecNumber>
    </recommendedName>
    <alternativeName>
        <fullName evidence="1">GTP-binding protein Obg</fullName>
    </alternativeName>
</protein>
<name>OBG_MYCSJ</name>
<feature type="chain" id="PRO_0000386059" description="GTPase Obg">
    <location>
        <begin position="1"/>
        <end position="485"/>
    </location>
</feature>
<feature type="domain" description="Obg" evidence="3">
    <location>
        <begin position="2"/>
        <end position="159"/>
    </location>
</feature>
<feature type="domain" description="OBG-type G" evidence="1">
    <location>
        <begin position="160"/>
        <end position="341"/>
    </location>
</feature>
<feature type="domain" description="OCT" evidence="2">
    <location>
        <begin position="359"/>
        <end position="437"/>
    </location>
</feature>
<feature type="region of interest" description="Disordered" evidence="4">
    <location>
        <begin position="439"/>
        <end position="485"/>
    </location>
</feature>
<feature type="compositionally biased region" description="Basic and acidic residues" evidence="4">
    <location>
        <begin position="452"/>
        <end position="468"/>
    </location>
</feature>
<feature type="binding site" evidence="1">
    <location>
        <begin position="166"/>
        <end position="173"/>
    </location>
    <ligand>
        <name>GTP</name>
        <dbReference type="ChEBI" id="CHEBI:37565"/>
    </ligand>
</feature>
<feature type="binding site" evidence="1">
    <location>
        <position position="173"/>
    </location>
    <ligand>
        <name>Mg(2+)</name>
        <dbReference type="ChEBI" id="CHEBI:18420"/>
    </ligand>
</feature>
<feature type="binding site" evidence="1">
    <location>
        <begin position="191"/>
        <end position="195"/>
    </location>
    <ligand>
        <name>GTP</name>
        <dbReference type="ChEBI" id="CHEBI:37565"/>
    </ligand>
</feature>
<feature type="binding site" evidence="1">
    <location>
        <position position="193"/>
    </location>
    <ligand>
        <name>Mg(2+)</name>
        <dbReference type="ChEBI" id="CHEBI:18420"/>
    </ligand>
</feature>
<feature type="binding site" evidence="1">
    <location>
        <begin position="212"/>
        <end position="215"/>
    </location>
    <ligand>
        <name>GTP</name>
        <dbReference type="ChEBI" id="CHEBI:37565"/>
    </ligand>
</feature>
<feature type="binding site" evidence="1">
    <location>
        <begin position="292"/>
        <end position="295"/>
    </location>
    <ligand>
        <name>GTP</name>
        <dbReference type="ChEBI" id="CHEBI:37565"/>
    </ligand>
</feature>
<feature type="binding site" evidence="1">
    <location>
        <begin position="322"/>
        <end position="324"/>
    </location>
    <ligand>
        <name>GTP</name>
        <dbReference type="ChEBI" id="CHEBI:37565"/>
    </ligand>
</feature>
<dbReference type="EC" id="3.6.5.-" evidence="1"/>
<dbReference type="EMBL" id="CP000580">
    <property type="protein sequence ID" value="ABN99330.1"/>
    <property type="molecule type" value="Genomic_DNA"/>
</dbReference>
<dbReference type="SMR" id="A3Q2F3"/>
<dbReference type="KEGG" id="mjl:Mjls_3553"/>
<dbReference type="HOGENOM" id="CLU_011747_2_1_11"/>
<dbReference type="BioCyc" id="MSP164757:G1G8C-3583-MONOMER"/>
<dbReference type="GO" id="GO:0005737">
    <property type="term" value="C:cytoplasm"/>
    <property type="evidence" value="ECO:0007669"/>
    <property type="project" value="UniProtKB-SubCell"/>
</dbReference>
<dbReference type="GO" id="GO:0005525">
    <property type="term" value="F:GTP binding"/>
    <property type="evidence" value="ECO:0007669"/>
    <property type="project" value="UniProtKB-UniRule"/>
</dbReference>
<dbReference type="GO" id="GO:0003924">
    <property type="term" value="F:GTPase activity"/>
    <property type="evidence" value="ECO:0007669"/>
    <property type="project" value="UniProtKB-UniRule"/>
</dbReference>
<dbReference type="GO" id="GO:0000287">
    <property type="term" value="F:magnesium ion binding"/>
    <property type="evidence" value="ECO:0007669"/>
    <property type="project" value="InterPro"/>
</dbReference>
<dbReference type="GO" id="GO:0042254">
    <property type="term" value="P:ribosome biogenesis"/>
    <property type="evidence" value="ECO:0007669"/>
    <property type="project" value="UniProtKB-UniRule"/>
</dbReference>
<dbReference type="CDD" id="cd01898">
    <property type="entry name" value="Obg"/>
    <property type="match status" value="1"/>
</dbReference>
<dbReference type="FunFam" id="2.70.210.12:FF:000001">
    <property type="entry name" value="GTPase Obg"/>
    <property type="match status" value="1"/>
</dbReference>
<dbReference type="Gene3D" id="3.30.300.350">
    <property type="entry name" value="GTP-binding protein OBG, C-terminal domain"/>
    <property type="match status" value="1"/>
</dbReference>
<dbReference type="Gene3D" id="2.70.210.12">
    <property type="entry name" value="GTP1/OBG domain"/>
    <property type="match status" value="1"/>
</dbReference>
<dbReference type="Gene3D" id="3.40.50.300">
    <property type="entry name" value="P-loop containing nucleotide triphosphate hydrolases"/>
    <property type="match status" value="1"/>
</dbReference>
<dbReference type="HAMAP" id="MF_01454">
    <property type="entry name" value="GTPase_Obg"/>
    <property type="match status" value="1"/>
</dbReference>
<dbReference type="InterPro" id="IPR031167">
    <property type="entry name" value="G_OBG"/>
</dbReference>
<dbReference type="InterPro" id="IPR006073">
    <property type="entry name" value="GTP-bd"/>
</dbReference>
<dbReference type="InterPro" id="IPR014100">
    <property type="entry name" value="GTP-bd_Obg/CgtA"/>
</dbReference>
<dbReference type="InterPro" id="IPR036346">
    <property type="entry name" value="GTP-bd_prot_GTP1/OBG_C_sf"/>
</dbReference>
<dbReference type="InterPro" id="IPR006074">
    <property type="entry name" value="GTP1-OBG_CS"/>
</dbReference>
<dbReference type="InterPro" id="IPR006169">
    <property type="entry name" value="GTP1_OBG_dom"/>
</dbReference>
<dbReference type="InterPro" id="IPR036726">
    <property type="entry name" value="GTP1_OBG_dom_sf"/>
</dbReference>
<dbReference type="InterPro" id="IPR045086">
    <property type="entry name" value="OBG_GTPase"/>
</dbReference>
<dbReference type="InterPro" id="IPR015349">
    <property type="entry name" value="OCT_dom"/>
</dbReference>
<dbReference type="InterPro" id="IPR027417">
    <property type="entry name" value="P-loop_NTPase"/>
</dbReference>
<dbReference type="NCBIfam" id="TIGR02729">
    <property type="entry name" value="Obg_CgtA"/>
    <property type="match status" value="1"/>
</dbReference>
<dbReference type="NCBIfam" id="TIGR03595">
    <property type="entry name" value="Obg_CgtA_exten"/>
    <property type="match status" value="1"/>
</dbReference>
<dbReference type="NCBIfam" id="NF008954">
    <property type="entry name" value="PRK12296.1"/>
    <property type="match status" value="1"/>
</dbReference>
<dbReference type="NCBIfam" id="NF008955">
    <property type="entry name" value="PRK12297.1"/>
    <property type="match status" value="1"/>
</dbReference>
<dbReference type="NCBIfam" id="NF008956">
    <property type="entry name" value="PRK12299.1"/>
    <property type="match status" value="1"/>
</dbReference>
<dbReference type="PANTHER" id="PTHR11702">
    <property type="entry name" value="DEVELOPMENTALLY REGULATED GTP-BINDING PROTEIN-RELATED"/>
    <property type="match status" value="1"/>
</dbReference>
<dbReference type="PANTHER" id="PTHR11702:SF31">
    <property type="entry name" value="MITOCHONDRIAL RIBOSOME-ASSOCIATED GTPASE 2"/>
    <property type="match status" value="1"/>
</dbReference>
<dbReference type="Pfam" id="PF09269">
    <property type="entry name" value="DUF1967"/>
    <property type="match status" value="1"/>
</dbReference>
<dbReference type="Pfam" id="PF01018">
    <property type="entry name" value="GTP1_OBG"/>
    <property type="match status" value="1"/>
</dbReference>
<dbReference type="Pfam" id="PF01926">
    <property type="entry name" value="MMR_HSR1"/>
    <property type="match status" value="1"/>
</dbReference>
<dbReference type="PRINTS" id="PR00326">
    <property type="entry name" value="GTP1OBG"/>
</dbReference>
<dbReference type="SUPFAM" id="SSF102741">
    <property type="entry name" value="Obg GTP-binding protein C-terminal domain"/>
    <property type="match status" value="1"/>
</dbReference>
<dbReference type="SUPFAM" id="SSF82051">
    <property type="entry name" value="Obg GTP-binding protein N-terminal domain"/>
    <property type="match status" value="1"/>
</dbReference>
<dbReference type="SUPFAM" id="SSF52540">
    <property type="entry name" value="P-loop containing nucleoside triphosphate hydrolases"/>
    <property type="match status" value="1"/>
</dbReference>
<dbReference type="PROSITE" id="PS51710">
    <property type="entry name" value="G_OBG"/>
    <property type="match status" value="1"/>
</dbReference>
<dbReference type="PROSITE" id="PS00905">
    <property type="entry name" value="GTP1_OBG"/>
    <property type="match status" value="1"/>
</dbReference>
<dbReference type="PROSITE" id="PS51883">
    <property type="entry name" value="OBG"/>
    <property type="match status" value="1"/>
</dbReference>
<dbReference type="PROSITE" id="PS51881">
    <property type="entry name" value="OCT"/>
    <property type="match status" value="1"/>
</dbReference>
<gene>
    <name evidence="1" type="primary">obg</name>
    <name type="ordered locus">Mjls_3553</name>
</gene>
<keyword id="KW-0963">Cytoplasm</keyword>
<keyword id="KW-0342">GTP-binding</keyword>
<keyword id="KW-0378">Hydrolase</keyword>
<keyword id="KW-0460">Magnesium</keyword>
<keyword id="KW-0479">Metal-binding</keyword>
<keyword id="KW-0547">Nucleotide-binding</keyword>
<evidence type="ECO:0000255" key="1">
    <source>
        <dbReference type="HAMAP-Rule" id="MF_01454"/>
    </source>
</evidence>
<evidence type="ECO:0000255" key="2">
    <source>
        <dbReference type="PROSITE-ProRule" id="PRU01229"/>
    </source>
</evidence>
<evidence type="ECO:0000255" key="3">
    <source>
        <dbReference type="PROSITE-ProRule" id="PRU01231"/>
    </source>
</evidence>
<evidence type="ECO:0000256" key="4">
    <source>
        <dbReference type="SAM" id="MobiDB-lite"/>
    </source>
</evidence>
<comment type="function">
    <text evidence="1">An essential GTPase which binds GTP, GDP and possibly (p)ppGpp with moderate affinity, with high nucleotide exchange rates and a fairly low GTP hydrolysis rate. Plays a role in control of the cell cycle, stress response, ribosome biogenesis and in those bacteria that undergo differentiation, in morphogenesis control.</text>
</comment>
<comment type="cofactor">
    <cofactor evidence="1">
        <name>Mg(2+)</name>
        <dbReference type="ChEBI" id="CHEBI:18420"/>
    </cofactor>
</comment>
<comment type="subunit">
    <text evidence="1">Monomer.</text>
</comment>
<comment type="subcellular location">
    <subcellularLocation>
        <location evidence="1">Cytoplasm</location>
    </subcellularLocation>
</comment>
<comment type="similarity">
    <text evidence="1">Belongs to the TRAFAC class OBG-HflX-like GTPase superfamily. OBG GTPase family.</text>
</comment>
<accession>A3Q2F3</accession>